<comment type="function">
    <text evidence="1">Forms part of the ribosomal stalk which helps the ribosome interact with GTP-bound translation factors. Is thus essential for accurate translation.</text>
</comment>
<comment type="subunit">
    <text evidence="1">Homodimer. Part of the ribosomal stalk of the 50S ribosomal subunit. Forms a multimeric L10(L12)X complex, where L10 forms an elongated spine to which 2 to 4 L12 dimers bind in a sequential fashion. Binds GTP-bound translation factors.</text>
</comment>
<comment type="similarity">
    <text evidence="1">Belongs to the bacterial ribosomal protein bL12 family.</text>
</comment>
<name>RL7_YERPS</name>
<reference key="1">
    <citation type="journal article" date="2004" name="Proc. Natl. Acad. Sci. U.S.A.">
        <title>Insights into the evolution of Yersinia pestis through whole-genome comparison with Yersinia pseudotuberculosis.</title>
        <authorList>
            <person name="Chain P.S.G."/>
            <person name="Carniel E."/>
            <person name="Larimer F.W."/>
            <person name="Lamerdin J."/>
            <person name="Stoutland P.O."/>
            <person name="Regala W.M."/>
            <person name="Georgescu A.M."/>
            <person name="Vergez L.M."/>
            <person name="Land M.L."/>
            <person name="Motin V.L."/>
            <person name="Brubaker R.R."/>
            <person name="Fowler J."/>
            <person name="Hinnebusch J."/>
            <person name="Marceau M."/>
            <person name="Medigue C."/>
            <person name="Simonet M."/>
            <person name="Chenal-Francisque V."/>
            <person name="Souza B."/>
            <person name="Dacheux D."/>
            <person name="Elliott J.M."/>
            <person name="Derbise A."/>
            <person name="Hauser L.J."/>
            <person name="Garcia E."/>
        </authorList>
    </citation>
    <scope>NUCLEOTIDE SEQUENCE [LARGE SCALE GENOMIC DNA]</scope>
    <source>
        <strain>IP32953</strain>
    </source>
</reference>
<sequence length="122" mass="12530">MSTITKDQILEGVAALSVMEIVELISAMEEKFGVSAAAVAAGPAAAVEAAEEQTEFDVVLASFGENKVAVIKAVRGATGLGLKEAKDLVESAPAVLKEGVNKDEAETLKKSLEEAGASVEIK</sequence>
<keyword id="KW-0687">Ribonucleoprotein</keyword>
<keyword id="KW-0689">Ribosomal protein</keyword>
<accession>Q66FQ3</accession>
<feature type="chain" id="PRO_0000243531" description="Large ribosomal subunit protein bL12">
    <location>
        <begin position="1"/>
        <end position="122"/>
    </location>
</feature>
<organism>
    <name type="scientific">Yersinia pseudotuberculosis serotype I (strain IP32953)</name>
    <dbReference type="NCBI Taxonomy" id="273123"/>
    <lineage>
        <taxon>Bacteria</taxon>
        <taxon>Pseudomonadati</taxon>
        <taxon>Pseudomonadota</taxon>
        <taxon>Gammaproteobacteria</taxon>
        <taxon>Enterobacterales</taxon>
        <taxon>Yersiniaceae</taxon>
        <taxon>Yersinia</taxon>
    </lineage>
</organism>
<protein>
    <recommendedName>
        <fullName evidence="1">Large ribosomal subunit protein bL12</fullName>
    </recommendedName>
    <alternativeName>
        <fullName evidence="2">50S ribosomal protein L7/L12</fullName>
    </alternativeName>
</protein>
<dbReference type="EMBL" id="BX936398">
    <property type="protein sequence ID" value="CAH19522.1"/>
    <property type="molecule type" value="Genomic_DNA"/>
</dbReference>
<dbReference type="RefSeq" id="WP_002210675.1">
    <property type="nucleotide sequence ID" value="NZ_CP009712.1"/>
</dbReference>
<dbReference type="SMR" id="Q66FQ3"/>
<dbReference type="GeneID" id="96663775"/>
<dbReference type="KEGG" id="ypo:BZ17_2292"/>
<dbReference type="KEGG" id="yps:YPTB0282"/>
<dbReference type="PATRIC" id="fig|273123.14.peg.2424"/>
<dbReference type="Proteomes" id="UP000001011">
    <property type="component" value="Chromosome"/>
</dbReference>
<dbReference type="GO" id="GO:0022625">
    <property type="term" value="C:cytosolic large ribosomal subunit"/>
    <property type="evidence" value="ECO:0007669"/>
    <property type="project" value="TreeGrafter"/>
</dbReference>
<dbReference type="GO" id="GO:0003729">
    <property type="term" value="F:mRNA binding"/>
    <property type="evidence" value="ECO:0007669"/>
    <property type="project" value="TreeGrafter"/>
</dbReference>
<dbReference type="GO" id="GO:0003735">
    <property type="term" value="F:structural constituent of ribosome"/>
    <property type="evidence" value="ECO:0007669"/>
    <property type="project" value="InterPro"/>
</dbReference>
<dbReference type="GO" id="GO:0006412">
    <property type="term" value="P:translation"/>
    <property type="evidence" value="ECO:0007669"/>
    <property type="project" value="UniProtKB-UniRule"/>
</dbReference>
<dbReference type="CDD" id="cd00387">
    <property type="entry name" value="Ribosomal_L7_L12"/>
    <property type="match status" value="1"/>
</dbReference>
<dbReference type="FunFam" id="3.30.1390.10:FF:000001">
    <property type="entry name" value="50S ribosomal protein L7/L12"/>
    <property type="match status" value="1"/>
</dbReference>
<dbReference type="Gene3D" id="3.30.1390.10">
    <property type="match status" value="1"/>
</dbReference>
<dbReference type="Gene3D" id="1.20.5.710">
    <property type="entry name" value="Single helix bin"/>
    <property type="match status" value="1"/>
</dbReference>
<dbReference type="HAMAP" id="MF_00368">
    <property type="entry name" value="Ribosomal_bL12"/>
    <property type="match status" value="1"/>
</dbReference>
<dbReference type="InterPro" id="IPR000206">
    <property type="entry name" value="Ribosomal_bL12"/>
</dbReference>
<dbReference type="InterPro" id="IPR013823">
    <property type="entry name" value="Ribosomal_bL12_C"/>
</dbReference>
<dbReference type="InterPro" id="IPR014719">
    <property type="entry name" value="Ribosomal_bL12_C/ClpS-like"/>
</dbReference>
<dbReference type="InterPro" id="IPR008932">
    <property type="entry name" value="Ribosomal_bL12_oligo"/>
</dbReference>
<dbReference type="InterPro" id="IPR036235">
    <property type="entry name" value="Ribosomal_bL12_oligo_N_sf"/>
</dbReference>
<dbReference type="NCBIfam" id="TIGR00855">
    <property type="entry name" value="L12"/>
    <property type="match status" value="1"/>
</dbReference>
<dbReference type="PANTHER" id="PTHR45987">
    <property type="entry name" value="39S RIBOSOMAL PROTEIN L12"/>
    <property type="match status" value="1"/>
</dbReference>
<dbReference type="PANTHER" id="PTHR45987:SF4">
    <property type="entry name" value="LARGE RIBOSOMAL SUBUNIT PROTEIN BL12M"/>
    <property type="match status" value="1"/>
</dbReference>
<dbReference type="Pfam" id="PF00542">
    <property type="entry name" value="Ribosomal_L12"/>
    <property type="match status" value="1"/>
</dbReference>
<dbReference type="Pfam" id="PF16320">
    <property type="entry name" value="Ribosomal_L12_N"/>
    <property type="match status" value="1"/>
</dbReference>
<dbReference type="SUPFAM" id="SSF54736">
    <property type="entry name" value="ClpS-like"/>
    <property type="match status" value="1"/>
</dbReference>
<dbReference type="SUPFAM" id="SSF48300">
    <property type="entry name" value="Ribosomal protein L7/12, oligomerisation (N-terminal) domain"/>
    <property type="match status" value="1"/>
</dbReference>
<evidence type="ECO:0000255" key="1">
    <source>
        <dbReference type="HAMAP-Rule" id="MF_00368"/>
    </source>
</evidence>
<evidence type="ECO:0000305" key="2"/>
<gene>
    <name evidence="1" type="primary">rplL</name>
    <name type="ordered locus">YPTB0282</name>
</gene>
<proteinExistence type="inferred from homology"/>